<protein>
    <recommendedName>
        <fullName evidence="2">DNA integrity scanning protein DisA</fullName>
    </recommendedName>
    <alternativeName>
        <fullName evidence="2">Cyclic di-AMP synthase</fullName>
        <shortName evidence="2">c-di-AMP synthase</shortName>
    </alternativeName>
    <alternativeName>
        <fullName evidence="2">Diadenylate cyclase</fullName>
        <ecNumber evidence="2">2.7.7.85</ecNumber>
    </alternativeName>
</protein>
<comment type="function">
    <text evidence="2">Participates in a DNA-damage check-point that is active prior to asymmetric division when DNA is damaged. DisA forms globular foci that rapidly scan along the chromosomes during sporulation, searching for lesions. When a lesion is present, DisA pauses at the lesion site. This triggers a cellular response that culminates in a temporary block in sporulation initiation.</text>
</comment>
<comment type="function">
    <text evidence="2">Also has diadenylate cyclase activity, catalyzing the condensation of 2 ATP molecules into cyclic di-AMP (c-di-AMP). c-di-AMP acts as a signaling molecule that couples DNA integrity with progression of sporulation. The rise in c-di-AMP level generated by DisA while scanning the chromosome, operates as a positive signal that advances sporulation; upon encountering a lesion, the DisA focus arrests at the damaged site and halts c-di-AMP synthesis.</text>
</comment>
<comment type="catalytic activity">
    <reaction evidence="2">
        <text>2 ATP = 3',3'-c-di-AMP + 2 diphosphate</text>
        <dbReference type="Rhea" id="RHEA:35655"/>
        <dbReference type="ChEBI" id="CHEBI:30616"/>
        <dbReference type="ChEBI" id="CHEBI:33019"/>
        <dbReference type="ChEBI" id="CHEBI:71500"/>
        <dbReference type="EC" id="2.7.7.85"/>
    </reaction>
</comment>
<comment type="cofactor">
    <cofactor evidence="2">
        <name>Mg(2+)</name>
        <dbReference type="ChEBI" id="CHEBI:18420"/>
    </cofactor>
</comment>
<comment type="activity regulation">
    <text evidence="1">Diadenylate cyclase activity is inhibited by the interaction with RadA.</text>
</comment>
<comment type="subunit">
    <text evidence="2 4">Homooctamer (By similarity). Interacts with RadA.</text>
</comment>
<comment type="similarity">
    <text evidence="2">Belongs to the DisA family.</text>
</comment>
<evidence type="ECO:0000250" key="1"/>
<evidence type="ECO:0000255" key="2">
    <source>
        <dbReference type="HAMAP-Rule" id="MF_01438"/>
    </source>
</evidence>
<evidence type="ECO:0000255" key="3">
    <source>
        <dbReference type="PROSITE-ProRule" id="PRU01130"/>
    </source>
</evidence>
<evidence type="ECO:0000269" key="4">
    <source>
    </source>
</evidence>
<feature type="chain" id="PRO_1000017366" description="DNA integrity scanning protein DisA">
    <location>
        <begin position="1"/>
        <end position="357"/>
    </location>
</feature>
<feature type="domain" description="DAC" evidence="3">
    <location>
        <begin position="8"/>
        <end position="146"/>
    </location>
</feature>
<feature type="binding site" evidence="2">
    <location>
        <position position="75"/>
    </location>
    <ligand>
        <name>ATP</name>
        <dbReference type="ChEBI" id="CHEBI:30616"/>
    </ligand>
</feature>
<feature type="binding site" evidence="2">
    <location>
        <position position="93"/>
    </location>
    <ligand>
        <name>ATP</name>
        <dbReference type="ChEBI" id="CHEBI:30616"/>
    </ligand>
</feature>
<feature type="binding site" evidence="2">
    <location>
        <begin position="106"/>
        <end position="110"/>
    </location>
    <ligand>
        <name>ATP</name>
        <dbReference type="ChEBI" id="CHEBI:30616"/>
    </ligand>
</feature>
<organism>
    <name type="scientific">Bacillus thuringiensis (strain Al Hakam)</name>
    <dbReference type="NCBI Taxonomy" id="412694"/>
    <lineage>
        <taxon>Bacteria</taxon>
        <taxon>Bacillati</taxon>
        <taxon>Bacillota</taxon>
        <taxon>Bacilli</taxon>
        <taxon>Bacillales</taxon>
        <taxon>Bacillaceae</taxon>
        <taxon>Bacillus</taxon>
        <taxon>Bacillus cereus group</taxon>
    </lineage>
</organism>
<proteinExistence type="evidence at protein level"/>
<gene>
    <name evidence="2" type="primary">disA</name>
    <name type="ordered locus">BALH_0083</name>
</gene>
<sequence>MEENKQRVKSMINILQLVAPGTPLREGIDNVLRAQTGGLIVLGYNEQIKSIVDGGFHINCAFSPASLYELAKMDGALILNETGSKILIANAQLVPESSIDSIETGMRHRTAERVAKQTGSLVVAISQRRNVITLYQGNLRYTLKDIGVILTKANQAIQTLEKYKAVWNDGITNLGILEFEEVVTMSEVVHVLHSVEMVLRIKNEILSYIHELGTEGRLIRLQLTELLADLEAEAALLIKDYYQEKTQDHHQILKKLQELANTQLLEDSDLVKLLGYPGQTSLEESVTPRGYRITSKISRVPPLIIENLINRFKTLQGVCRATINELDDVEGIGEVRAKKIREGLKRIQEHLYMSRHN</sequence>
<accession>A0R8F5</accession>
<reference key="1">
    <citation type="journal article" date="2007" name="J. Bacteriol.">
        <title>The complete genome sequence of Bacillus thuringiensis Al Hakam.</title>
        <authorList>
            <person name="Challacombe J.F."/>
            <person name="Altherr M.R."/>
            <person name="Xie G."/>
            <person name="Bhotika S.S."/>
            <person name="Brown N."/>
            <person name="Bruce D."/>
            <person name="Campbell C.S."/>
            <person name="Campbell M.L."/>
            <person name="Chen J."/>
            <person name="Chertkov O."/>
            <person name="Cleland C."/>
            <person name="Dimitrijevic M."/>
            <person name="Doggett N.A."/>
            <person name="Fawcett J.J."/>
            <person name="Glavina T."/>
            <person name="Goodwin L.A."/>
            <person name="Green L.D."/>
            <person name="Han C.S."/>
            <person name="Hill K.K."/>
            <person name="Hitchcock P."/>
            <person name="Jackson P.J."/>
            <person name="Keim P."/>
            <person name="Kewalramani A.R."/>
            <person name="Longmire J."/>
            <person name="Lucas S."/>
            <person name="Malfatti S."/>
            <person name="Martinez D."/>
            <person name="McMurry K."/>
            <person name="Meincke L.J."/>
            <person name="Misra M."/>
            <person name="Moseman B.L."/>
            <person name="Mundt M."/>
            <person name="Munk A.C."/>
            <person name="Okinaka R.T."/>
            <person name="Parson-Quintana B."/>
            <person name="Reilly L.P."/>
            <person name="Richardson P."/>
            <person name="Robinson D.L."/>
            <person name="Saunders E."/>
            <person name="Tapia R."/>
            <person name="Tesmer J.G."/>
            <person name="Thayer N."/>
            <person name="Thompson L.S."/>
            <person name="Tice H."/>
            <person name="Ticknor L.O."/>
            <person name="Wills P.L."/>
            <person name="Gilna P."/>
            <person name="Brettin T.S."/>
        </authorList>
    </citation>
    <scope>NUCLEOTIDE SEQUENCE [LARGE SCALE GENOMIC DNA]</scope>
    <source>
        <strain>Al Hakam</strain>
    </source>
</reference>
<reference key="2">
    <citation type="journal article" date="2013" name="J. Biol. Chem.">
        <title>Radiation-sensitive gene A (RadA) targets DisA, DNA integrity scanning protein A, to negatively affect cyclic di-AMP synthesis activity in Mycobacterium smegmatis.</title>
        <authorList>
            <person name="Zhang L."/>
            <person name="He Z.G."/>
        </authorList>
    </citation>
    <scope>INTERACTION WITH RADA</scope>
</reference>
<name>DISA_BACAH</name>
<keyword id="KW-0067">ATP-binding</keyword>
<keyword id="KW-0227">DNA damage</keyword>
<keyword id="KW-0234">DNA repair</keyword>
<keyword id="KW-0238">DNA-binding</keyword>
<keyword id="KW-0460">Magnesium</keyword>
<keyword id="KW-0547">Nucleotide-binding</keyword>
<keyword id="KW-0548">Nucleotidyltransferase</keyword>
<keyword id="KW-0808">Transferase</keyword>
<dbReference type="EC" id="2.7.7.85" evidence="2"/>
<dbReference type="EMBL" id="CP000485">
    <property type="protein sequence ID" value="ABK83498.1"/>
    <property type="molecule type" value="Genomic_DNA"/>
</dbReference>
<dbReference type="RefSeq" id="WP_000392168.1">
    <property type="nucleotide sequence ID" value="NC_008600.1"/>
</dbReference>
<dbReference type="SMR" id="A0R8F5"/>
<dbReference type="GeneID" id="93010970"/>
<dbReference type="KEGG" id="btl:BALH_0083"/>
<dbReference type="HOGENOM" id="CLU_787128_0_0_9"/>
<dbReference type="GO" id="GO:0004016">
    <property type="term" value="F:adenylate cyclase activity"/>
    <property type="evidence" value="ECO:0007669"/>
    <property type="project" value="TreeGrafter"/>
</dbReference>
<dbReference type="GO" id="GO:0005524">
    <property type="term" value="F:ATP binding"/>
    <property type="evidence" value="ECO:0007669"/>
    <property type="project" value="UniProtKB-UniRule"/>
</dbReference>
<dbReference type="GO" id="GO:0106408">
    <property type="term" value="F:diadenylate cyclase activity"/>
    <property type="evidence" value="ECO:0007669"/>
    <property type="project" value="UniProtKB-EC"/>
</dbReference>
<dbReference type="GO" id="GO:0003677">
    <property type="term" value="F:DNA binding"/>
    <property type="evidence" value="ECO:0007669"/>
    <property type="project" value="UniProtKB-UniRule"/>
</dbReference>
<dbReference type="GO" id="GO:0006281">
    <property type="term" value="P:DNA repair"/>
    <property type="evidence" value="ECO:0007669"/>
    <property type="project" value="UniProtKB-UniRule"/>
</dbReference>
<dbReference type="FunFam" id="1.10.150.20:FF:000023">
    <property type="entry name" value="DNA integrity scanning protein DisA"/>
    <property type="match status" value="1"/>
</dbReference>
<dbReference type="FunFam" id="1.20.1260.110:FF:000001">
    <property type="entry name" value="DNA integrity scanning protein DisA"/>
    <property type="match status" value="1"/>
</dbReference>
<dbReference type="FunFam" id="3.40.1700.10:FF:000001">
    <property type="entry name" value="DNA integrity scanning protein DisA"/>
    <property type="match status" value="1"/>
</dbReference>
<dbReference type="Gene3D" id="1.10.150.20">
    <property type="entry name" value="5' to 3' exonuclease, C-terminal subdomain"/>
    <property type="match status" value="1"/>
</dbReference>
<dbReference type="Gene3D" id="1.20.1260.110">
    <property type="entry name" value="DNA integrity scanning linker region"/>
    <property type="match status" value="1"/>
</dbReference>
<dbReference type="Gene3D" id="3.40.1700.10">
    <property type="entry name" value="DNA integrity scanning protein, DisA, N-terminal domain"/>
    <property type="match status" value="1"/>
</dbReference>
<dbReference type="HAMAP" id="MF_01438">
    <property type="entry name" value="DisA"/>
    <property type="match status" value="1"/>
</dbReference>
<dbReference type="InterPro" id="IPR050338">
    <property type="entry name" value="DisA"/>
</dbReference>
<dbReference type="InterPro" id="IPR038331">
    <property type="entry name" value="DisA_sf"/>
</dbReference>
<dbReference type="InterPro" id="IPR036888">
    <property type="entry name" value="DNA_integrity_DisA_N_sf"/>
</dbReference>
<dbReference type="InterPro" id="IPR018906">
    <property type="entry name" value="DNA_integrity_scan_DisA_link"/>
</dbReference>
<dbReference type="InterPro" id="IPR003390">
    <property type="entry name" value="DNA_integrity_scan_DisA_N"/>
</dbReference>
<dbReference type="InterPro" id="IPR023763">
    <property type="entry name" value="DNA_integrity_scanning_protein"/>
</dbReference>
<dbReference type="InterPro" id="IPR010994">
    <property type="entry name" value="RuvA_2-like"/>
</dbReference>
<dbReference type="NCBIfam" id="NF010009">
    <property type="entry name" value="PRK13482.1"/>
    <property type="match status" value="1"/>
</dbReference>
<dbReference type="PANTHER" id="PTHR34185">
    <property type="entry name" value="DIADENYLATE CYCLASE"/>
    <property type="match status" value="1"/>
</dbReference>
<dbReference type="PANTHER" id="PTHR34185:SF3">
    <property type="entry name" value="DNA INTEGRITY SCANNING PROTEIN DISA"/>
    <property type="match status" value="1"/>
</dbReference>
<dbReference type="Pfam" id="PF02457">
    <property type="entry name" value="DAC"/>
    <property type="match status" value="1"/>
</dbReference>
<dbReference type="Pfam" id="PF10635">
    <property type="entry name" value="DisA-linker"/>
    <property type="match status" value="1"/>
</dbReference>
<dbReference type="SUPFAM" id="SSF47781">
    <property type="entry name" value="RuvA domain 2-like"/>
    <property type="match status" value="1"/>
</dbReference>
<dbReference type="SUPFAM" id="SSF143597">
    <property type="entry name" value="YojJ-like"/>
    <property type="match status" value="1"/>
</dbReference>
<dbReference type="PROSITE" id="PS51794">
    <property type="entry name" value="DAC"/>
    <property type="match status" value="1"/>
</dbReference>